<gene>
    <name evidence="1" type="primary">M</name>
</gene>
<feature type="chain" id="PRO_0000078862" description="Matrix protein 1">
    <location>
        <begin position="1"/>
        <end position="252"/>
    </location>
</feature>
<feature type="region of interest" description="Membrane-binding" evidence="1">
    <location>
        <begin position="1"/>
        <end position="164"/>
    </location>
</feature>
<feature type="region of interest" description="RNP-binding" evidence="1">
    <location>
        <begin position="165"/>
        <end position="252"/>
    </location>
</feature>
<feature type="short sequence motif" description="Nuclear localization signal" evidence="1">
    <location>
        <begin position="101"/>
        <end position="105"/>
    </location>
</feature>
<evidence type="ECO:0000255" key="1">
    <source>
        <dbReference type="HAMAP-Rule" id="MF_04068"/>
    </source>
</evidence>
<dbReference type="EMBL" id="M12699">
    <property type="protein sequence ID" value="AAA43313.1"/>
    <property type="molecule type" value="Genomic_RNA"/>
</dbReference>
<dbReference type="PIR" id="A29511">
    <property type="entry name" value="MFIV1M"/>
</dbReference>
<dbReference type="SMR" id="P08381"/>
<dbReference type="Proteomes" id="UP000098172">
    <property type="component" value="Genome"/>
</dbReference>
<dbReference type="GO" id="GO:0042025">
    <property type="term" value="C:host cell nucleus"/>
    <property type="evidence" value="ECO:0007669"/>
    <property type="project" value="UniProtKB-SubCell"/>
</dbReference>
<dbReference type="GO" id="GO:0016020">
    <property type="term" value="C:membrane"/>
    <property type="evidence" value="ECO:0007669"/>
    <property type="project" value="UniProtKB-KW"/>
</dbReference>
<dbReference type="GO" id="GO:0055036">
    <property type="term" value="C:virion membrane"/>
    <property type="evidence" value="ECO:0007669"/>
    <property type="project" value="UniProtKB-SubCell"/>
</dbReference>
<dbReference type="GO" id="GO:0003723">
    <property type="term" value="F:RNA binding"/>
    <property type="evidence" value="ECO:0007669"/>
    <property type="project" value="UniProtKB-UniRule"/>
</dbReference>
<dbReference type="GO" id="GO:0039660">
    <property type="term" value="F:structural constituent of virion"/>
    <property type="evidence" value="ECO:0007669"/>
    <property type="project" value="UniProtKB-UniRule"/>
</dbReference>
<dbReference type="GO" id="GO:0046761">
    <property type="term" value="P:viral budding from plasma membrane"/>
    <property type="evidence" value="ECO:0007669"/>
    <property type="project" value="UniProtKB-UniRule"/>
</dbReference>
<dbReference type="FunFam" id="1.10.10.180:FF:000001">
    <property type="entry name" value="Matrix protein 1"/>
    <property type="match status" value="1"/>
</dbReference>
<dbReference type="FunFam" id="1.20.91.10:FF:000001">
    <property type="entry name" value="Matrix protein 1"/>
    <property type="match status" value="1"/>
</dbReference>
<dbReference type="Gene3D" id="1.10.10.180">
    <property type="match status" value="1"/>
</dbReference>
<dbReference type="Gene3D" id="1.20.91.10">
    <property type="match status" value="1"/>
</dbReference>
<dbReference type="HAMAP" id="MF_04068">
    <property type="entry name" value="INFV_M1"/>
    <property type="match status" value="1"/>
</dbReference>
<dbReference type="InterPro" id="IPR036039">
    <property type="entry name" value="Flu_matrix_M1"/>
</dbReference>
<dbReference type="InterPro" id="IPR013188">
    <property type="entry name" value="Flu_matrix_M1_C"/>
</dbReference>
<dbReference type="InterPro" id="IPR001561">
    <property type="entry name" value="Flu_matrix_M1_N"/>
</dbReference>
<dbReference type="InterPro" id="IPR015423">
    <property type="entry name" value="Flu_matrix_M1_N_sub1"/>
</dbReference>
<dbReference type="InterPro" id="IPR015799">
    <property type="entry name" value="Flu_matrix_M1_N_sub2"/>
</dbReference>
<dbReference type="InterPro" id="IPR037533">
    <property type="entry name" value="INFV_M1"/>
</dbReference>
<dbReference type="Pfam" id="PF00598">
    <property type="entry name" value="Flu_M1"/>
    <property type="match status" value="1"/>
</dbReference>
<dbReference type="Pfam" id="PF08289">
    <property type="entry name" value="Flu_M1_C"/>
    <property type="match status" value="1"/>
</dbReference>
<dbReference type="SMART" id="SM00759">
    <property type="entry name" value="Flu_M1_C"/>
    <property type="match status" value="1"/>
</dbReference>
<dbReference type="SUPFAM" id="SSF48145">
    <property type="entry name" value="Influenza virus matrix protein M1"/>
    <property type="match status" value="1"/>
</dbReference>
<organism>
    <name type="scientific">Influenza A virus (strain A/Mallard/New York/6750/1978 H2N2)</name>
    <dbReference type="NCBI Taxonomy" id="384502"/>
    <lineage>
        <taxon>Viruses</taxon>
        <taxon>Riboviria</taxon>
        <taxon>Orthornavirae</taxon>
        <taxon>Negarnaviricota</taxon>
        <taxon>Polyploviricotina</taxon>
        <taxon>Insthoviricetes</taxon>
        <taxon>Articulavirales</taxon>
        <taxon>Orthomyxoviridae</taxon>
        <taxon>Alphainfluenzavirus</taxon>
        <taxon>Alphainfluenzavirus influenzae</taxon>
        <taxon>Influenza A virus</taxon>
    </lineage>
</organism>
<comment type="function">
    <text evidence="1">Plays critical roles in virus replication, from virus entry and uncoating to assembly and budding of the virus particle. M1 binding to ribonucleocapsids (RNPs) in nucleus seems to inhibit viral transcription. Interaction of viral NEP with M1-RNP is thought to promote nuclear export of the complex, which is targeted to the virion assembly site at the apical plasma membrane in polarized epithelial cells. Interactions with NA and HA may bring M1, a non-raft-associated protein, into lipid rafts. Forms a continuous shell on the inner side of the lipid bilayer in virion, where it binds the RNP. During virus entry into cell, the M2 ion channel acidifies the internal virion core, inducing M1 dissociation from the RNP. M1-free RNPs are transported to the nucleus, where viral transcription and replication can take place.</text>
</comment>
<comment type="function">
    <text evidence="1">Determines the virion's shape: spherical or filamentous. Clinical isolates of influenza are characterized by the presence of significant proportion of filamentous virions, whereas after multiple passage on eggs or cell culture, virions have only spherical morphology. Filamentous virions are thought to be important to infect neighboring cells, and spherical virions more suited to spread through aerosol between hosts organisms.</text>
</comment>
<comment type="subunit">
    <text evidence="1">Homodimer and homomultimer. Interacts with NEP. Binds ribonucleocapsid by both interacting with genomic RNA and NP protein. May interact with HA and NA. Cannot bind NP without genomic RNA.</text>
</comment>
<comment type="subcellular location">
    <subcellularLocation>
        <location evidence="1">Virion membrane</location>
        <topology evidence="1">Peripheral membrane protein</topology>
        <orientation evidence="1">Cytoplasmic side</orientation>
    </subcellularLocation>
    <subcellularLocation>
        <location evidence="1">Host nucleus</location>
    </subcellularLocation>
</comment>
<comment type="alternative products">
    <event type="alternative splicing"/>
    <isoform>
        <id>P08381-1</id>
        <name>M1</name>
        <sequence type="displayed"/>
    </isoform>
    <isoform>
        <id>P08382-1</id>
        <name>M2</name>
        <sequence type="external"/>
    </isoform>
    <text>Only the first 9 residues are shared by the 2 isoforms.</text>
</comment>
<comment type="miscellaneous">
    <text evidence="1">Most abundant protein in virion. When expressed alone can form virus-like particles in transfected cells.</text>
</comment>
<comment type="similarity">
    <text evidence="1">Belongs to the influenza viruses Matrix protein M1 family.</text>
</comment>
<reference key="1">
    <citation type="journal article" date="1986" name="J. Virol.">
        <title>Characterization of a gene coding for M proteins which is involved in host range restriction of an avian influenza A virus in monkeys.</title>
        <authorList>
            <person name="Buckler-White A.J."/>
            <person name="Naeve C.W."/>
            <person name="Murphy B.R."/>
        </authorList>
    </citation>
    <scope>NUCLEOTIDE SEQUENCE [GENOMIC RNA]</scope>
</reference>
<sequence length="252" mass="27926">MSLLTEVETYVLSIVPSGPLKAEIAQRLEDVFAGKNTDLEALMEWLKTRPILSPLTKGILGFVFTLTVPSERGLQRRRFVQNALNGNGDSNNMDRAVKLYRKLKREITFHGAKEVALSYSTGALATCMGLIYNRMGTVTTEVAFGLVCATCEQIADSQHRSHRQMVITTNPLIRHENRMVLASTTAKAMEQMAGSSEQAAEAMEVASQARQMVQAMRTIGTHPSSSAGLKDDLLENLQAYQKRMGVQMQRFK</sequence>
<proteinExistence type="inferred from homology"/>
<organismHost>
    <name type="scientific">Aves</name>
    <dbReference type="NCBI Taxonomy" id="8782"/>
</organismHost>
<organismHost>
    <name type="scientific">Homo sapiens</name>
    <name type="common">Human</name>
    <dbReference type="NCBI Taxonomy" id="9606"/>
</organismHost>
<accession>P08381</accession>
<name>M1_I78A3</name>
<protein>
    <recommendedName>
        <fullName evidence="1">Matrix protein 1</fullName>
        <shortName evidence="1">M1</shortName>
    </recommendedName>
</protein>
<keyword id="KW-0025">Alternative splicing</keyword>
<keyword id="KW-1048">Host nucleus</keyword>
<keyword id="KW-0472">Membrane</keyword>
<keyword id="KW-0694">RNA-binding</keyword>
<keyword id="KW-0468">Viral matrix protein</keyword>
<keyword id="KW-0946">Virion</keyword>